<dbReference type="EC" id="4.3.1.24" evidence="4 5"/>
<dbReference type="EMBL" id="MF405174">
    <property type="protein sequence ID" value="AUG71935.1"/>
    <property type="molecule type" value="mRNA"/>
</dbReference>
<dbReference type="SMR" id="A0A2H5AIY6"/>
<dbReference type="UniPathway" id="UPA00713">
    <property type="reaction ID" value="UER00725"/>
</dbReference>
<dbReference type="GO" id="GO:0005737">
    <property type="term" value="C:cytoplasm"/>
    <property type="evidence" value="ECO:0007669"/>
    <property type="project" value="UniProtKB-SubCell"/>
</dbReference>
<dbReference type="GO" id="GO:0045548">
    <property type="term" value="F:phenylalanine ammonia-lyase activity"/>
    <property type="evidence" value="ECO:0007669"/>
    <property type="project" value="UniProtKB-EC"/>
</dbReference>
<dbReference type="GO" id="GO:0009820">
    <property type="term" value="P:alkaloid metabolic process"/>
    <property type="evidence" value="ECO:0007669"/>
    <property type="project" value="UniProtKB-KW"/>
</dbReference>
<dbReference type="GO" id="GO:0009800">
    <property type="term" value="P:cinnamic acid biosynthetic process"/>
    <property type="evidence" value="ECO:0007669"/>
    <property type="project" value="UniProtKB-UniPathway"/>
</dbReference>
<dbReference type="GO" id="GO:0006559">
    <property type="term" value="P:L-phenylalanine catabolic process"/>
    <property type="evidence" value="ECO:0007669"/>
    <property type="project" value="UniProtKB-KW"/>
</dbReference>
<dbReference type="CDD" id="cd00332">
    <property type="entry name" value="PAL-HAL"/>
    <property type="match status" value="1"/>
</dbReference>
<dbReference type="FunFam" id="1.10.274.20:FF:000001">
    <property type="entry name" value="Phenylalanine ammonia-lyase"/>
    <property type="match status" value="1"/>
</dbReference>
<dbReference type="FunFam" id="1.10.275.10:FF:000009">
    <property type="entry name" value="Phenylalanine ammonia-lyase"/>
    <property type="match status" value="1"/>
</dbReference>
<dbReference type="FunFam" id="1.20.200.10:FF:000009">
    <property type="entry name" value="Phenylalanine ammonia-lyase"/>
    <property type="match status" value="1"/>
</dbReference>
<dbReference type="Gene3D" id="1.20.200.10">
    <property type="entry name" value="Fumarase/aspartase (Central domain)"/>
    <property type="match status" value="1"/>
</dbReference>
<dbReference type="Gene3D" id="1.10.275.10">
    <property type="entry name" value="Fumarase/aspartase (N-terminal domain)"/>
    <property type="match status" value="1"/>
</dbReference>
<dbReference type="Gene3D" id="1.10.274.20">
    <property type="entry name" value="Phenylalanine ammonia-lyase 1, domain 3"/>
    <property type="match status" value="1"/>
</dbReference>
<dbReference type="InterPro" id="IPR001106">
    <property type="entry name" value="Aromatic_Lyase"/>
</dbReference>
<dbReference type="InterPro" id="IPR024083">
    <property type="entry name" value="Fumarase/histidase_N"/>
</dbReference>
<dbReference type="InterPro" id="IPR008948">
    <property type="entry name" value="L-Aspartase-like"/>
</dbReference>
<dbReference type="InterPro" id="IPR022313">
    <property type="entry name" value="Phe/His_NH3-lyase_AS"/>
</dbReference>
<dbReference type="InterPro" id="IPR005922">
    <property type="entry name" value="Phe_NH3-lyase"/>
</dbReference>
<dbReference type="InterPro" id="IPR023144">
    <property type="entry name" value="Phe_NH3-lyase_shielding_dom_sf"/>
</dbReference>
<dbReference type="NCBIfam" id="TIGR01226">
    <property type="entry name" value="phe_am_lyase"/>
    <property type="match status" value="1"/>
</dbReference>
<dbReference type="PANTHER" id="PTHR10362">
    <property type="entry name" value="HISTIDINE AMMONIA-LYASE"/>
    <property type="match status" value="1"/>
</dbReference>
<dbReference type="Pfam" id="PF00221">
    <property type="entry name" value="Lyase_aromatic"/>
    <property type="match status" value="1"/>
</dbReference>
<dbReference type="SUPFAM" id="SSF48557">
    <property type="entry name" value="L-aspartase-like"/>
    <property type="match status" value="1"/>
</dbReference>
<dbReference type="PROSITE" id="PS00488">
    <property type="entry name" value="PAL_HISTIDASE"/>
    <property type="match status" value="1"/>
</dbReference>
<evidence type="ECO:0000250" key="1">
    <source>
        <dbReference type="UniProtKB" id="P11544"/>
    </source>
</evidence>
<evidence type="ECO:0000250" key="2">
    <source>
        <dbReference type="UniProtKB" id="P24481"/>
    </source>
</evidence>
<evidence type="ECO:0000250" key="3">
    <source>
        <dbReference type="UniProtKB" id="Q68G84"/>
    </source>
</evidence>
<evidence type="ECO:0000250" key="4">
    <source>
        <dbReference type="UniProtKB" id="Q6GZ04"/>
    </source>
</evidence>
<evidence type="ECO:0000255" key="5">
    <source>
        <dbReference type="PROSITE-ProRule" id="PRU10122"/>
    </source>
</evidence>
<evidence type="ECO:0000269" key="6">
    <source>
    </source>
</evidence>
<evidence type="ECO:0000303" key="7">
    <source>
    </source>
</evidence>
<evidence type="ECO:0000305" key="8"/>
<evidence type="ECO:0000312" key="9">
    <source>
        <dbReference type="EMBL" id="AUG71935.1"/>
    </source>
</evidence>
<keyword id="KW-0017">Alkaloid metabolism</keyword>
<keyword id="KW-0963">Cytoplasm</keyword>
<keyword id="KW-0456">Lyase</keyword>
<keyword id="KW-0585">Phenylalanine catabolism</keyword>
<keyword id="KW-0587">Phenylpropanoid metabolism</keyword>
<protein>
    <recommendedName>
        <fullName evidence="7">Phenylalanine ammonia-lyase 2</fullName>
        <ecNumber evidence="4 5">4.3.1.24</ecNumber>
    </recommendedName>
</protein>
<accession>A0A2H5AIY6</accession>
<name>PAL2_NARPS</name>
<comment type="function">
    <text evidence="2">This is a key enzyme of plant metabolism catalyzing the first reaction in the biosynthesis from L-phenylalanine of a wide variety of natural products based on the phenylpropane skeleton.</text>
</comment>
<comment type="catalytic activity">
    <reaction evidence="4 5">
        <text>L-phenylalanine = (E)-cinnamate + NH4(+)</text>
        <dbReference type="Rhea" id="RHEA:21384"/>
        <dbReference type="ChEBI" id="CHEBI:15669"/>
        <dbReference type="ChEBI" id="CHEBI:28938"/>
        <dbReference type="ChEBI" id="CHEBI:58095"/>
        <dbReference type="EC" id="4.3.1.24"/>
    </reaction>
</comment>
<comment type="pathway">
    <text evidence="7">Alkaloid biosynthesis.</text>
</comment>
<comment type="pathway">
    <text evidence="4">Phenylpropanoid metabolism; trans-cinnamate biosynthesis; trans-cinnamate from L-phenylalanine: step 1/1.</text>
</comment>
<comment type="subunit">
    <text evidence="4">Homotetramer.</text>
</comment>
<comment type="subcellular location">
    <subcellularLocation>
        <location evidence="1">Cytoplasm</location>
    </subcellularLocation>
</comment>
<comment type="tissue specificity">
    <text evidence="6">Mostly expressed in stems and bulbs, and, to a lower extent, in roots, leaves and flowers.</text>
</comment>
<comment type="PTM">
    <text evidence="3">Contains an active site 4-methylidene-imidazol-5-one (MIO), which is formed autocatalytically by cyclization and dehydration of residues Ala-Ser-Gly.</text>
</comment>
<comment type="similarity">
    <text evidence="8">Belongs to the PAL/histidase family.</text>
</comment>
<proteinExistence type="evidence at transcript level"/>
<organism evidence="9">
    <name type="scientific">Narcissus pseudonarcissus</name>
    <name type="common">Daffodil</name>
    <dbReference type="NCBI Taxonomy" id="39639"/>
    <lineage>
        <taxon>Eukaryota</taxon>
        <taxon>Viridiplantae</taxon>
        <taxon>Streptophyta</taxon>
        <taxon>Embryophyta</taxon>
        <taxon>Tracheophyta</taxon>
        <taxon>Spermatophyta</taxon>
        <taxon>Magnoliopsida</taxon>
        <taxon>Liliopsida</taxon>
        <taxon>Asparagales</taxon>
        <taxon>Amaryllidaceae</taxon>
        <taxon>Amaryllidoideae</taxon>
        <taxon>Narcissus</taxon>
    </lineage>
</organism>
<gene>
    <name evidence="7" type="primary">PAL2</name>
</gene>
<reference key="1">
    <citation type="journal article" date="2017" name="Sci. Rep.">
        <title>Transcriptome and metabolome profiling of Narcissus pseudonarcissus 'King Alfred' reveal components of Amaryllidaceae alkaloid metabolism.</title>
        <authorList>
            <person name="Singh A."/>
            <person name="Desgagne-Penix I."/>
        </authorList>
    </citation>
    <scope>NUCLEOTIDE SEQUENCE [MRNA]</scope>
    <scope>REVIEW ON THE AMARYLLIDACEAE ALKALOID METABOLISM</scope>
    <scope>PATHWAY</scope>
    <scope>TISSUE SPECIFICITY</scope>
    <scope>GENE FAMILY</scope>
    <scope>NOMENCLATURE</scope>
    <source>
        <strain>cv. King Alfred</strain>
        <tissue>Bulb</tissue>
    </source>
</reference>
<feature type="chain" id="PRO_0000450632" description="Phenylalanine ammonia-lyase 2">
    <location>
        <begin position="1"/>
        <end position="686"/>
    </location>
</feature>
<feature type="active site" description="Proton donor/acceptor" evidence="3">
    <location>
        <position position="102"/>
    </location>
</feature>
<feature type="binding site" evidence="3">
    <location>
        <position position="254"/>
    </location>
    <ligand>
        <name>(E)-cinnamate</name>
        <dbReference type="ChEBI" id="CHEBI:15669"/>
    </ligand>
</feature>
<feature type="binding site" evidence="3">
    <location>
        <position position="342"/>
    </location>
    <ligand>
        <name>(E)-cinnamate</name>
        <dbReference type="ChEBI" id="CHEBI:15669"/>
    </ligand>
</feature>
<feature type="binding site" evidence="3">
    <location>
        <position position="348"/>
    </location>
    <ligand>
        <name>(E)-cinnamate</name>
        <dbReference type="ChEBI" id="CHEBI:15669"/>
    </ligand>
</feature>
<feature type="binding site" evidence="3">
    <location>
        <position position="378"/>
    </location>
    <ligand>
        <name>(E)-cinnamate</name>
        <dbReference type="ChEBI" id="CHEBI:15669"/>
    </ligand>
</feature>
<feature type="binding site" evidence="1">
    <location>
        <position position="450"/>
    </location>
    <ligand>
        <name>(E)-cinnamate</name>
        <dbReference type="ChEBI" id="CHEBI:15669"/>
    </ligand>
</feature>
<feature type="binding site" evidence="1">
    <location>
        <position position="478"/>
    </location>
    <ligand>
        <name>(E)-cinnamate</name>
        <dbReference type="ChEBI" id="CHEBI:15669"/>
    </ligand>
</feature>
<feature type="binding site" evidence="3">
    <location>
        <position position="481"/>
    </location>
    <ligand>
        <name>(E)-cinnamate</name>
        <dbReference type="ChEBI" id="CHEBI:15669"/>
    </ligand>
</feature>
<feature type="modified residue" description="2,3-didehydroalanine (Ser)" evidence="3 5">
    <location>
        <position position="197"/>
    </location>
</feature>
<feature type="cross-link" description="5-imidazolinone (Ala-Gly)" evidence="3">
    <location>
        <begin position="196"/>
        <end position="198"/>
    </location>
</feature>
<sequence>MEINGNGHVSSPSLCLNKDPLNWGAAAEALTGSHLDEVKRMVEEYRCSTVRLEGADLKISQVAAVAAVASTVSVELSEAAKDGVKASSEWVRESMAKGTDSYGVTTGFGATSHRRTKQGGALQNELIRFLNAGIFGSGKESGNTLPASTTRAAMLVRINTLLQGYSGIRFEILEAITALLNANVTPCLPLRGTITASGDLVPLSYIAGMLTGRPNSKAVGPDGTTIDASEAFKLAGIPNGFFELQPKEGLALVNGTAVGSGLASTVLFDANILAVLSEIISAVFCEVMQGKPEFTDHLTHKLKHHPGQIEAAAIMEHILEGSSYMQMAKKLHELDPLQKPKQDRYALRTSPQWLGPQIEVIRSSTKSIEREINSVNDNPLIDVSRNKAIHGGNFQGTPIGVSMDNTRLAIAAIGKLMFAQISELVNDFYNNGLPSNLSGGRDPSLDYGFKGAEIAMAAYCSELQYLANPVTNHVQSAEQHNQDVNSLGLISSRKTAEAVEILKLMTSTFLVALCQAIDLRHLEENFKQAVKNTVSQVSKRVLTTGISGDLHPSRFCEKELVKVIDREYVFTYIDDPCSYAYPLMQKLRQVLVEHALSNGEKEKDANTSIFQKIAAFEEELKAALPKEVEAARVSVENGSAAIANRIKECRSYPLYRFVREELGARFLTGEKVVSPGEEFDKVFVGI</sequence>